<protein>
    <recommendedName>
        <fullName>HTH-type transcriptional repressor GbsR</fullName>
    </recommendedName>
    <alternativeName>
        <fullName>Glycine betaine synthesis regulator</fullName>
    </alternativeName>
</protein>
<name>GBSR_BACSU</name>
<keyword id="KW-0238">DNA-binding</keyword>
<keyword id="KW-1185">Reference proteome</keyword>
<keyword id="KW-0678">Repressor</keyword>
<keyword id="KW-0804">Transcription</keyword>
<keyword id="KW-0805">Transcription regulation</keyword>
<gene>
    <name type="primary">gbsR</name>
    <name type="synonym">yuaC</name>
    <name type="ordered locus">BSU31070</name>
</gene>
<feature type="chain" id="PRO_0000049912" description="HTH-type transcriptional repressor GbsR">
    <location>
        <begin position="1"/>
        <end position="180"/>
    </location>
</feature>
<feature type="DNA-binding region" description="H-T-H motif" evidence="1">
    <location>
        <begin position="49"/>
        <end position="73"/>
    </location>
</feature>
<dbReference type="EMBL" id="U47861">
    <property type="protein sequence ID" value="AAC44366.1"/>
    <property type="molecule type" value="Genomic_DNA"/>
</dbReference>
<dbReference type="EMBL" id="AL009126">
    <property type="protein sequence ID" value="CAB15085.1"/>
    <property type="molecule type" value="Genomic_DNA"/>
</dbReference>
<dbReference type="PIR" id="E70005">
    <property type="entry name" value="E70005"/>
</dbReference>
<dbReference type="RefSeq" id="NP_390985.1">
    <property type="nucleotide sequence ID" value="NC_000964.3"/>
</dbReference>
<dbReference type="RefSeq" id="WP_003244320.1">
    <property type="nucleotide sequence ID" value="NZ_OZ025638.1"/>
</dbReference>
<dbReference type="SMR" id="P71015"/>
<dbReference type="FunCoup" id="P71015">
    <property type="interactions" value="59"/>
</dbReference>
<dbReference type="STRING" id="224308.BSU31070"/>
<dbReference type="PaxDb" id="224308-BSU31070"/>
<dbReference type="EnsemblBacteria" id="CAB15085">
    <property type="protein sequence ID" value="CAB15085"/>
    <property type="gene ID" value="BSU_31070"/>
</dbReference>
<dbReference type="GeneID" id="938843"/>
<dbReference type="KEGG" id="bsu:BSU31070"/>
<dbReference type="PATRIC" id="fig|224308.179.peg.3367"/>
<dbReference type="eggNOG" id="COG1510">
    <property type="taxonomic scope" value="Bacteria"/>
</dbReference>
<dbReference type="InParanoid" id="P71015"/>
<dbReference type="OrthoDB" id="9800374at2"/>
<dbReference type="PhylomeDB" id="P71015"/>
<dbReference type="BioCyc" id="BSUB:BSU31070-MONOMER"/>
<dbReference type="Proteomes" id="UP000001570">
    <property type="component" value="Chromosome"/>
</dbReference>
<dbReference type="GO" id="GO:0003677">
    <property type="term" value="F:DNA binding"/>
    <property type="evidence" value="ECO:0007669"/>
    <property type="project" value="UniProtKB-KW"/>
</dbReference>
<dbReference type="Gene3D" id="1.10.10.10">
    <property type="entry name" value="Winged helix-like DNA-binding domain superfamily/Winged helix DNA-binding domain"/>
    <property type="match status" value="1"/>
</dbReference>
<dbReference type="InterPro" id="IPR052362">
    <property type="entry name" value="HTH-GbsR_regulator"/>
</dbReference>
<dbReference type="InterPro" id="IPR026282">
    <property type="entry name" value="MJ1563"/>
</dbReference>
<dbReference type="InterPro" id="IPR036388">
    <property type="entry name" value="WH-like_DNA-bd_sf"/>
</dbReference>
<dbReference type="InterPro" id="IPR036390">
    <property type="entry name" value="WH_DNA-bd_sf"/>
</dbReference>
<dbReference type="NCBIfam" id="NF047500">
    <property type="entry name" value="choline_R_CudC"/>
    <property type="match status" value="1"/>
</dbReference>
<dbReference type="PANTHER" id="PTHR38465">
    <property type="entry name" value="HTH-TYPE TRANSCRIPTIONAL REGULATOR MJ1563-RELATED"/>
    <property type="match status" value="1"/>
</dbReference>
<dbReference type="PANTHER" id="PTHR38465:SF1">
    <property type="entry name" value="HTH-TYPE TRANSCRIPTIONAL REGULATOR MJ1563-RELATED"/>
    <property type="match status" value="1"/>
</dbReference>
<dbReference type="PIRSF" id="PIRSF006707">
    <property type="entry name" value="MJ1563"/>
    <property type="match status" value="1"/>
</dbReference>
<dbReference type="SUPFAM" id="SSF46785">
    <property type="entry name" value="Winged helix' DNA-binding domain"/>
    <property type="match status" value="1"/>
</dbReference>
<evidence type="ECO:0000255" key="1"/>
<evidence type="ECO:0000269" key="2">
    <source>
    </source>
</evidence>
<evidence type="ECO:0000305" key="3"/>
<proteinExistence type="inferred from homology"/>
<accession>P71015</accession>
<reference key="1">
    <citation type="journal article" date="1996" name="J. Bacteriol.">
        <title>Synthesis of the osmoprotectant glycine betaine in Bacillus subtilis: characterization of the gbsAB genes.</title>
        <authorList>
            <person name="Boch J."/>
            <person name="Kempf B."/>
            <person name="Schmid R."/>
            <person name="Bremer E."/>
        </authorList>
    </citation>
    <scope>NUCLEOTIDE SEQUENCE [GENOMIC DNA]</scope>
    <source>
        <strain>168 / JH642</strain>
    </source>
</reference>
<reference key="2">
    <citation type="journal article" date="1997" name="Nature">
        <title>The complete genome sequence of the Gram-positive bacterium Bacillus subtilis.</title>
        <authorList>
            <person name="Kunst F."/>
            <person name="Ogasawara N."/>
            <person name="Moszer I."/>
            <person name="Albertini A.M."/>
            <person name="Alloni G."/>
            <person name="Azevedo V."/>
            <person name="Bertero M.G."/>
            <person name="Bessieres P."/>
            <person name="Bolotin A."/>
            <person name="Borchert S."/>
            <person name="Borriss R."/>
            <person name="Boursier L."/>
            <person name="Brans A."/>
            <person name="Braun M."/>
            <person name="Brignell S.C."/>
            <person name="Bron S."/>
            <person name="Brouillet S."/>
            <person name="Bruschi C.V."/>
            <person name="Caldwell B."/>
            <person name="Capuano V."/>
            <person name="Carter N.M."/>
            <person name="Choi S.-K."/>
            <person name="Codani J.-J."/>
            <person name="Connerton I.F."/>
            <person name="Cummings N.J."/>
            <person name="Daniel R.A."/>
            <person name="Denizot F."/>
            <person name="Devine K.M."/>
            <person name="Duesterhoeft A."/>
            <person name="Ehrlich S.D."/>
            <person name="Emmerson P.T."/>
            <person name="Entian K.-D."/>
            <person name="Errington J."/>
            <person name="Fabret C."/>
            <person name="Ferrari E."/>
            <person name="Foulger D."/>
            <person name="Fritz C."/>
            <person name="Fujita M."/>
            <person name="Fujita Y."/>
            <person name="Fuma S."/>
            <person name="Galizzi A."/>
            <person name="Galleron N."/>
            <person name="Ghim S.-Y."/>
            <person name="Glaser P."/>
            <person name="Goffeau A."/>
            <person name="Golightly E.J."/>
            <person name="Grandi G."/>
            <person name="Guiseppi G."/>
            <person name="Guy B.J."/>
            <person name="Haga K."/>
            <person name="Haiech J."/>
            <person name="Harwood C.R."/>
            <person name="Henaut A."/>
            <person name="Hilbert H."/>
            <person name="Holsappel S."/>
            <person name="Hosono S."/>
            <person name="Hullo M.-F."/>
            <person name="Itaya M."/>
            <person name="Jones L.-M."/>
            <person name="Joris B."/>
            <person name="Karamata D."/>
            <person name="Kasahara Y."/>
            <person name="Klaerr-Blanchard M."/>
            <person name="Klein C."/>
            <person name="Kobayashi Y."/>
            <person name="Koetter P."/>
            <person name="Koningstein G."/>
            <person name="Krogh S."/>
            <person name="Kumano M."/>
            <person name="Kurita K."/>
            <person name="Lapidus A."/>
            <person name="Lardinois S."/>
            <person name="Lauber J."/>
            <person name="Lazarevic V."/>
            <person name="Lee S.-M."/>
            <person name="Levine A."/>
            <person name="Liu H."/>
            <person name="Masuda S."/>
            <person name="Mauel C."/>
            <person name="Medigue C."/>
            <person name="Medina N."/>
            <person name="Mellado R.P."/>
            <person name="Mizuno M."/>
            <person name="Moestl D."/>
            <person name="Nakai S."/>
            <person name="Noback M."/>
            <person name="Noone D."/>
            <person name="O'Reilly M."/>
            <person name="Ogawa K."/>
            <person name="Ogiwara A."/>
            <person name="Oudega B."/>
            <person name="Park S.-H."/>
            <person name="Parro V."/>
            <person name="Pohl T.M."/>
            <person name="Portetelle D."/>
            <person name="Porwollik S."/>
            <person name="Prescott A.M."/>
            <person name="Presecan E."/>
            <person name="Pujic P."/>
            <person name="Purnelle B."/>
            <person name="Rapoport G."/>
            <person name="Rey M."/>
            <person name="Reynolds S."/>
            <person name="Rieger M."/>
            <person name="Rivolta C."/>
            <person name="Rocha E."/>
            <person name="Roche B."/>
            <person name="Rose M."/>
            <person name="Sadaie Y."/>
            <person name="Sato T."/>
            <person name="Scanlan E."/>
            <person name="Schleich S."/>
            <person name="Schroeter R."/>
            <person name="Scoffone F."/>
            <person name="Sekiguchi J."/>
            <person name="Sekowska A."/>
            <person name="Seror S.J."/>
            <person name="Serror P."/>
            <person name="Shin B.-S."/>
            <person name="Soldo B."/>
            <person name="Sorokin A."/>
            <person name="Tacconi E."/>
            <person name="Takagi T."/>
            <person name="Takahashi H."/>
            <person name="Takemaru K."/>
            <person name="Takeuchi M."/>
            <person name="Tamakoshi A."/>
            <person name="Tanaka T."/>
            <person name="Terpstra P."/>
            <person name="Tognoni A."/>
            <person name="Tosato V."/>
            <person name="Uchiyama S."/>
            <person name="Vandenbol M."/>
            <person name="Vannier F."/>
            <person name="Vassarotti A."/>
            <person name="Viari A."/>
            <person name="Wambutt R."/>
            <person name="Wedler E."/>
            <person name="Wedler H."/>
            <person name="Weitzenegger T."/>
            <person name="Winters P."/>
            <person name="Wipat A."/>
            <person name="Yamamoto H."/>
            <person name="Yamane K."/>
            <person name="Yasumoto K."/>
            <person name="Yata K."/>
            <person name="Yoshida K."/>
            <person name="Yoshikawa H.-F."/>
            <person name="Zumstein E."/>
            <person name="Yoshikawa H."/>
            <person name="Danchin A."/>
        </authorList>
    </citation>
    <scope>NUCLEOTIDE SEQUENCE [LARGE SCALE GENOMIC DNA]</scope>
    <source>
        <strain>168</strain>
    </source>
</reference>
<reference key="3">
    <citation type="journal article" date="2012" name="J. Bacteriol.">
        <title>Genetic control of osmoadaptive glycine betaine synthesis in Bacillus subtilis through the choline-sensing and glycine betaine-responsive GbsR repressor.</title>
        <authorList>
            <person name="Nau-Wagner G."/>
            <person name="Opper D."/>
            <person name="Rolbetzki A."/>
            <person name="Boch J."/>
            <person name="Kempf B."/>
            <person name="Hoffmann T."/>
            <person name="Bremer E."/>
        </authorList>
    </citation>
    <scope>FUNCTION</scope>
    <scope>ACTIVITY REGULATION</scope>
    <scope>GENE NAME</scope>
    <source>
        <strain>168 / JH642</strain>
    </source>
</reference>
<sequence length="180" mass="21070">MDENPEFAAIEQARDLVIDSIAETMDLYGITRSVGILYGTMYMRDEMTLDEMREELQMSKPSMSTGVKKLQDLNVVKKTFHRGIRKHTFVAEKDFFKFFTNFFPPKWEREVQVNVTAIEEAQADLQKVLCKEDLDEDIKNEALQLYDQLESSKAYYDWLKRLAESVQTGEIFKFIPVETK</sequence>
<organism>
    <name type="scientific">Bacillus subtilis (strain 168)</name>
    <dbReference type="NCBI Taxonomy" id="224308"/>
    <lineage>
        <taxon>Bacteria</taxon>
        <taxon>Bacillati</taxon>
        <taxon>Bacillota</taxon>
        <taxon>Bacilli</taxon>
        <taxon>Bacillales</taxon>
        <taxon>Bacillaceae</taxon>
        <taxon>Bacillus</taxon>
    </lineage>
</organism>
<comment type="function">
    <text evidence="2">Negatively regulates the expression of the gbsAB and opuB operons. Required to control expression of these genes in response to choline availability. Also required to down-regulate glycine betaine production once cellular adjustment to high osmolarity has been achieved.</text>
</comment>
<comment type="activity regulation">
    <text evidence="2">Intracellular choline sensor. Binding to choline induces conformational changes and relieves the repressing effects of GbsR on expression.</text>
</comment>
<comment type="similarity">
    <text evidence="3">Belongs to the GbsR family.</text>
</comment>